<sequence>MKFSNITIKNFRNFEKVNINLDNKNVIFGMNDIGKTNFLYALRFLLDKEIRKFGFNKSDYHKHDTSKKIEIILTLDLSNYEKDEDTKKLISVVKGARTSANADVFYIALESKYDDKELYGNIILKWGSELDNLIDIPGRGNINALDNVFKVIYINPLVDLDKLFAQNKKYIFEESQGNESDEGILNNIKSLTDQVNQQIGEMTIIKGFQQEITSEYRSLKKEEVSIELKSEMAIKGFFSDIIPYIKKDGDSNYYPTSGDGRRKMLSYSIYNYLAKKKYEDKIVIYLIEEPEISLHRSMQIALSKQLFEQSTYKYFFLSTHSPELLYEMDNTRLIRVHSTEKVVCSSHMYNVEEAYGSVKKKLNKALSSALFAERVLLIEGPSEKILFEKVLDEVEPEYELNGGFLLEVGGTYFNHYVCTLNDLGITHIIKTDNDLKSKKGKKGVYELLGLNRCLNLLGRENLDEITIDIPEDIKGKKKKERLNERKKEIFKQYKNEVGEFLGERIYLSEIDLENDLYSAIGESMKRIFENEDPVHYLQKSKLFNMVELVNNLSTKDCFDVFEHEKFACLKELVGSDRG</sequence>
<evidence type="ECO:0000250" key="1">
    <source>
        <dbReference type="UniProtKB" id="E8PLM2"/>
    </source>
</evidence>
<evidence type="ECO:0000269" key="2">
    <source>
    </source>
</evidence>
<evidence type="ECO:0000269" key="3">
    <source>
    </source>
</evidence>
<evidence type="ECO:0000269" key="4">
    <source>
    </source>
</evidence>
<evidence type="ECO:0000303" key="5">
    <source>
    </source>
</evidence>
<evidence type="ECO:0000303" key="6">
    <source>
    </source>
</evidence>
<evidence type="ECO:0000305" key="7">
    <source>
    </source>
</evidence>
<evidence type="ECO:0000305" key="8">
    <source>
    </source>
</evidence>
<evidence type="ECO:0000312" key="9">
    <source>
        <dbReference type="EMBL" id="EJR29742.1"/>
    </source>
</evidence>
<evidence type="ECO:0007744" key="10">
    <source>
        <dbReference type="PDB" id="8SM3"/>
    </source>
</evidence>
<evidence type="ECO:0007744" key="11">
    <source>
        <dbReference type="PDB" id="8U7I"/>
    </source>
</evidence>
<evidence type="ECO:0007829" key="12">
    <source>
        <dbReference type="PDB" id="8JQ9"/>
    </source>
</evidence>
<evidence type="ECO:0007829" key="13">
    <source>
        <dbReference type="PDB" id="8SM3"/>
    </source>
</evidence>
<evidence type="ECO:0007829" key="14">
    <source>
        <dbReference type="PDB" id="8TJY"/>
    </source>
</evidence>
<evidence type="ECO:0007829" key="15">
    <source>
        <dbReference type="PDB" id="8U7I"/>
    </source>
</evidence>
<evidence type="ECO:0007829" key="16">
    <source>
        <dbReference type="PDB" id="8WY4"/>
    </source>
</evidence>
<evidence type="ECO:0007829" key="17">
    <source>
        <dbReference type="PDB" id="8X51"/>
    </source>
</evidence>
<proteinExistence type="evidence at protein level"/>
<name>GAJA_BACC6</name>
<comment type="function">
    <text evidence="2 3 4 8">Component of antiviral defense system Gabija type I, composed of GajA and GajB (PubMed:29371424). Endonuclease that nicks double-stranded DNA within the sequence 5'-TNNNCGGGNNA-3' in the absence of nucleotides (NTP, dNTP and NDPs), cleaving after C-1 (PubMed:33885789, PubMed:37992757). Has no detected ATPase activity (PubMed:33885789). Expression of Gabija type I in B.subtilis (strain BEST7003) confers resistance to phages phi105, phi29, rho14, SpBeta and SBSphiC (PubMed:29371424). Expression of Gabija type I in E.coli B (strain ATCC 11303) confers resistance to phage T7 (PubMed:33885789). It is thought that this enzyme is strongly suppressed during physiological growth (in E.coli total nucleotide concentration is over 8.7 mM in mid-log phase), but during viral replication, when nucleotides are rapidly consumed, it is de-suppressed and degrades target DNA (Probable).</text>
</comment>
<comment type="cofactor">
    <cofactor evidence="3">
        <name>Mg(2+)</name>
        <dbReference type="ChEBI" id="CHEBI:18420"/>
    </cofactor>
    <cofactor evidence="3">
        <name>Mn(2+)</name>
        <dbReference type="ChEBI" id="CHEBI:29035"/>
    </cofactor>
    <text evidence="3">Rapid, sequence-specific cleavage at physiological concentrations of Mg(2+) (4-5 mM) or Mn(2+) (15 uM). In presence of &gt;20 uM Mn(2+) has rapid non-specific cleavage activity.</text>
</comment>
<comment type="activity regulation">
    <text evidence="3">Endonuclease activity inhibited by all NTPs, dNTPs, NDPs (at 0.5 mM, UDP not tested) and AMP-PNP; not inhibited by any tested NMP, dNMP or nucleoside. Inhibited by 100 mM NaCl, 100 mM KCl, 0.5 mM Co(2+) and 0.5 mM Ni(2+).</text>
</comment>
<comment type="biophysicochemical properties">
    <phDependence>
        <text evidence="3">Optimum pH is 9.0.</text>
    </phDependence>
    <temperatureDependence>
        <text evidence="3">Optimum temperature is 37-42 degrees Celsius.</text>
    </temperatureDependence>
</comment>
<comment type="subunit">
    <text evidence="4">Homotetramer (PubMed:37992757). Forms the core of the anti-phage defense complex (PubMed:37992757). Interacts with GajB; 2 GajB dimers dock at opposite sides of the GajA complex to form a 4:4 GajA-GajB assembly (GajAB) (PubMed:37992757). GajAB interacts with Bacillus phage Phi3T Gad1 protein; this interaction forms a 4:4:8 GajAB-Gad1 complex and leads to GajAB inhibition (PubMed:37992757).</text>
</comment>
<comment type="domain">
    <text evidence="3 8">The N-terminal ATPase-like domain seems to have lost ATPase activity, but may still bind nucleotides (Probable). The C-terminal Toprim (topoisomerase/primase) domain probably has the endonuclease activity, but when expressed alone (residues 348-578) has not activity, showing it requires the N-terminal ATPase-like domain for function (PubMed:33885789).</text>
</comment>
<comment type="disruption phenotype">
    <text evidence="2">When this gene is missing the Gabija type I system does not confer resistance to SpBeta in B.subtilis.</text>
</comment>
<accession>J8H9C1</accession>
<reference evidence="9" key="1">
    <citation type="submission" date="2012-04" db="EMBL/GenBank/DDBJ databases">
        <title>The Genome Sequence of Bacillus cereus VD045.</title>
        <authorList>
            <consortium name="The Broad Institute Genome Sequencing Platform"/>
            <consortium name="The Broad Institute Genome Sequencing Center for Infectious Disease"/>
            <person name="Feldgarden M."/>
            <person name="Van der Auwera G.A."/>
            <person name="Mahillon J."/>
            <person name="Duprez V."/>
            <person name="Timmery S."/>
            <person name="Mattelet C."/>
            <person name="Dierick K."/>
            <person name="Sun M."/>
            <person name="Yu Z."/>
            <person name="Zhu L."/>
            <person name="Hu X."/>
            <person name="Shank E.B."/>
            <person name="Swiecicka I."/>
            <person name="Hansen B.M."/>
            <person name="Andrup L."/>
            <person name="Young S.K."/>
            <person name="Zeng Q."/>
            <person name="Gargeya S."/>
            <person name="Fitzgerald M."/>
            <person name="Haas B."/>
            <person name="Abouelleil A."/>
            <person name="Alvarado L."/>
            <person name="Arachchi H.M."/>
            <person name="Berlin A."/>
            <person name="Chapman S.B."/>
            <person name="Goldberg J."/>
            <person name="Griggs A."/>
            <person name="Gujja S."/>
            <person name="Hansen M."/>
            <person name="Howarth C."/>
            <person name="Imamovic A."/>
            <person name="Larimer J."/>
            <person name="McCowen C."/>
            <person name="Montmayeur A."/>
            <person name="Murphy C."/>
            <person name="Neiman D."/>
            <person name="Pearson M."/>
            <person name="Priest M."/>
            <person name="Roberts A."/>
            <person name="Saif S."/>
            <person name="Shea T."/>
            <person name="Sisk P."/>
            <person name="Sykes S."/>
            <person name="Wortman J."/>
            <person name="Nusbaum C."/>
            <person name="Birren B."/>
        </authorList>
    </citation>
    <scope>NUCLEOTIDE SEQUENCE [LARGE SCALE GENOMIC DNA]</scope>
    <source>
        <strain>VD045</strain>
    </source>
</reference>
<reference key="2">
    <citation type="journal article" date="2018" name="Science">
        <title>Systematic discovery of antiphage defense systems in the microbial pangenome.</title>
        <authorList>
            <person name="Doron S."/>
            <person name="Melamed S."/>
            <person name="Ofir G."/>
            <person name="Leavitt A."/>
            <person name="Lopatina A."/>
            <person name="Keren M."/>
            <person name="Amitai G."/>
            <person name="Sorek R."/>
        </authorList>
    </citation>
    <scope>FUNCTION</scope>
    <scope>DISRUPTION PHENOTYPE</scope>
    <scope>EXPRESSION IN B.SUBTILIS</scope>
    <source>
        <strain>VD045</strain>
    </source>
</reference>
<reference key="3">
    <citation type="journal article" date="2021" name="Nucleic Acids Res.">
        <title>A nucleotide-sensing endonuclease from the Gabija bacterial defense system.</title>
        <authorList>
            <person name="Cheng R."/>
            <person name="Huang F."/>
            <person name="Wu H."/>
            <person name="Lu X."/>
            <person name="Yan Y."/>
            <person name="Yu B."/>
            <person name="Wang X."/>
            <person name="Zhu B."/>
        </authorList>
    </citation>
    <scope>FUNCTION IN VIRUS DEFENSE</scope>
    <scope>FUNCTION AS AN ENDONUCLEASE</scope>
    <scope>CATALYTIC ACTIVITY</scope>
    <scope>COFACTOR</scope>
    <scope>ACTIVITY REGULATION</scope>
    <scope>BIOPHYSICOCHEMICAL PROPERTIES</scope>
    <scope>SUBUNIT</scope>
    <scope>DOMAIN</scope>
    <scope>EXPRESSION IN E.COLI</scope>
    <scope>MUTAGENESIS OF LYS-35; HIS-320; GLU-379; ASP-511 AND LYS-541</scope>
    <source>
        <strain>VD045</strain>
    </source>
</reference>
<reference evidence="10 11" key="4">
    <citation type="journal article" date="2024" name="Nature">
        <title>Structural basis of Gabija anti-phage defence and viral immune evasion.</title>
        <authorList>
            <person name="Antine S.P."/>
            <person name="Johnson A.G."/>
            <person name="Mooney S.E."/>
            <person name="Leavitt A."/>
            <person name="Mayer M.L."/>
            <person name="Yirmiya E."/>
            <person name="Amitai G."/>
            <person name="Sorek R."/>
            <person name="Kranzusch P.J."/>
        </authorList>
    </citation>
    <scope>STRUCTURE BY ELECTRON MICROSCOPY (2.57 ANGSTROMS) OF 2-578</scope>
    <scope>SUBUNIT</scope>
    <scope>FUNCTION</scope>
    <scope>INTERACTION AS A GAJAB COMPLEX WITH BACILLUS PHAGE PHI3T GAD1</scope>
</reference>
<keyword id="KW-0002">3D-structure</keyword>
<keyword id="KW-0051">Antiviral defense</keyword>
<keyword id="KW-0255">Endonuclease</keyword>
<keyword id="KW-0945">Host-virus interaction</keyword>
<keyword id="KW-0378">Hydrolase</keyword>
<keyword id="KW-0460">Magnesium</keyword>
<keyword id="KW-0479">Metal-binding</keyword>
<keyword id="KW-0540">Nuclease</keyword>
<feature type="chain" id="PRO_0000456380" description="Endonuclease GajA">
    <location>
        <begin position="1"/>
        <end position="578"/>
    </location>
</feature>
<feature type="region of interest" description="ATPase domain" evidence="8">
    <location>
        <begin position="1"/>
        <end position="341"/>
    </location>
</feature>
<feature type="region of interest" description="Toprim domain" evidence="8">
    <location>
        <begin position="370"/>
        <end position="510"/>
    </location>
</feature>
<feature type="binding site" evidence="8">
    <location>
        <begin position="32"/>
        <end position="36"/>
    </location>
    <ligand>
        <name>ATP</name>
        <dbReference type="ChEBI" id="CHEBI:30616"/>
    </ligand>
</feature>
<feature type="binding site" evidence="1">
    <location>
        <position position="379"/>
    </location>
    <ligand>
        <name>a divalent metal cation</name>
        <dbReference type="ChEBI" id="CHEBI:60240"/>
        <label>1</label>
    </ligand>
</feature>
<feature type="binding site" evidence="1">
    <location>
        <position position="383"/>
    </location>
    <ligand>
        <name>a divalent metal cation</name>
        <dbReference type="ChEBI" id="CHEBI:60240"/>
        <label>2</label>
    </ligand>
</feature>
<feature type="binding site" evidence="1">
    <location>
        <position position="463"/>
    </location>
    <ligand>
        <name>a divalent metal cation</name>
        <dbReference type="ChEBI" id="CHEBI:60240"/>
        <label>1</label>
    </ligand>
</feature>
<feature type="binding site" evidence="1">
    <location>
        <position position="464"/>
    </location>
    <ligand>
        <name>a divalent metal cation</name>
        <dbReference type="ChEBI" id="CHEBI:60240"/>
        <label>1</label>
    </ligand>
</feature>
<feature type="binding site" evidence="1">
    <location>
        <position position="513"/>
    </location>
    <ligand>
        <name>a divalent metal cation</name>
        <dbReference type="ChEBI" id="CHEBI:60240"/>
        <label>2</label>
    </ligand>
</feature>
<feature type="site" description="Interaction with GajB" evidence="4">
    <location>
        <position position="94"/>
    </location>
</feature>
<feature type="site" description="Interaction with GajB" evidence="4">
    <location>
        <position position="97"/>
    </location>
</feature>
<feature type="mutagenesis site" description="Retains endonuclease activity." evidence="3">
    <original>K</original>
    <variation>A</variation>
    <location>
        <position position="35"/>
    </location>
</feature>
<feature type="mutagenesis site" description="Retains endonuclease activity, ATP only partially inhibits endonuclease activity." evidence="3">
    <original>H</original>
    <variation>A</variation>
    <location>
        <position position="320"/>
    </location>
</feature>
<feature type="mutagenesis site" description="Loss of endonuclease activity." evidence="3">
    <original>E</original>
    <variation>A</variation>
    <location>
        <position position="379"/>
    </location>
</feature>
<feature type="mutagenesis site" description="Loss of endonuclease activity." evidence="3">
    <original>D</original>
    <variation>A</variation>
    <location>
        <position position="511"/>
    </location>
</feature>
<feature type="mutagenesis site" description="Loss of endonuclease activity." evidence="3">
    <original>K</original>
    <variation>A</variation>
    <location>
        <position position="541"/>
    </location>
</feature>
<feature type="strand" evidence="15">
    <location>
        <begin position="2"/>
        <end position="11"/>
    </location>
</feature>
<feature type="strand" evidence="15">
    <location>
        <begin position="14"/>
        <end position="20"/>
    </location>
</feature>
<feature type="strand" evidence="15">
    <location>
        <begin position="23"/>
        <end position="30"/>
    </location>
</feature>
<feature type="helix" evidence="15">
    <location>
        <begin position="32"/>
        <end position="46"/>
    </location>
</feature>
<feature type="helix" evidence="15">
    <location>
        <begin position="48"/>
        <end position="51"/>
    </location>
</feature>
<feature type="turn" evidence="13">
    <location>
        <begin position="57"/>
        <end position="59"/>
    </location>
</feature>
<feature type="helix" evidence="15">
    <location>
        <begin position="61"/>
        <end position="63"/>
    </location>
</feature>
<feature type="strand" evidence="13">
    <location>
        <begin position="65"/>
        <end position="67"/>
    </location>
</feature>
<feature type="strand" evidence="15">
    <location>
        <begin position="69"/>
        <end position="76"/>
    </location>
</feature>
<feature type="turn" evidence="15">
    <location>
        <begin position="80"/>
        <end position="82"/>
    </location>
</feature>
<feature type="helix" evidence="15">
    <location>
        <begin position="84"/>
        <end position="93"/>
    </location>
</feature>
<feature type="helix" evidence="15">
    <location>
        <begin position="94"/>
        <end position="96"/>
    </location>
</feature>
<feature type="helix" evidence="15">
    <location>
        <begin position="99"/>
        <end position="101"/>
    </location>
</feature>
<feature type="strand" evidence="15">
    <location>
        <begin position="104"/>
        <end position="111"/>
    </location>
</feature>
<feature type="turn" evidence="15">
    <location>
        <begin position="115"/>
        <end position="118"/>
    </location>
</feature>
<feature type="strand" evidence="15">
    <location>
        <begin position="123"/>
        <end position="128"/>
    </location>
</feature>
<feature type="strand" evidence="15">
    <location>
        <begin position="130"/>
        <end position="132"/>
    </location>
</feature>
<feature type="strand" evidence="12">
    <location>
        <begin position="139"/>
        <end position="141"/>
    </location>
</feature>
<feature type="helix" evidence="15">
    <location>
        <begin position="145"/>
        <end position="148"/>
    </location>
</feature>
<feature type="strand" evidence="15">
    <location>
        <begin position="149"/>
        <end position="154"/>
    </location>
</feature>
<feature type="helix" evidence="15">
    <location>
        <begin position="160"/>
        <end position="174"/>
    </location>
</feature>
<feature type="helix" evidence="15">
    <location>
        <begin position="179"/>
        <end position="200"/>
    </location>
</feature>
<feature type="helix" evidence="15">
    <location>
        <begin position="203"/>
        <end position="219"/>
    </location>
</feature>
<feature type="strand" evidence="15">
    <location>
        <begin position="224"/>
        <end position="230"/>
    </location>
</feature>
<feature type="helix" evidence="15">
    <location>
        <begin position="231"/>
        <end position="235"/>
    </location>
</feature>
<feature type="helix" evidence="15">
    <location>
        <begin position="237"/>
        <end position="240"/>
    </location>
</feature>
<feature type="strand" evidence="15">
    <location>
        <begin position="241"/>
        <end position="247"/>
    </location>
</feature>
<feature type="helix" evidence="15">
    <location>
        <begin position="259"/>
        <end position="276"/>
    </location>
</feature>
<feature type="strand" evidence="15">
    <location>
        <begin position="279"/>
        <end position="288"/>
    </location>
</feature>
<feature type="turn" evidence="15">
    <location>
        <begin position="290"/>
        <end position="293"/>
    </location>
</feature>
<feature type="helix" evidence="15">
    <location>
        <begin position="296"/>
        <end position="307"/>
    </location>
</feature>
<feature type="strand" evidence="15">
    <location>
        <begin position="309"/>
        <end position="311"/>
    </location>
</feature>
<feature type="strand" evidence="15">
    <location>
        <begin position="313"/>
        <end position="318"/>
    </location>
</feature>
<feature type="helix" evidence="15">
    <location>
        <begin position="322"/>
        <end position="325"/>
    </location>
</feature>
<feature type="strand" evidence="15">
    <location>
        <begin position="330"/>
        <end position="336"/>
    </location>
</feature>
<feature type="strand" evidence="12">
    <location>
        <begin position="338"/>
        <end position="341"/>
    </location>
</feature>
<feature type="strand" evidence="15">
    <location>
        <begin position="344"/>
        <end position="349"/>
    </location>
</feature>
<feature type="helix" evidence="15">
    <location>
        <begin position="354"/>
        <end position="356"/>
    </location>
</feature>
<feature type="helix" evidence="15">
    <location>
        <begin position="359"/>
        <end position="369"/>
    </location>
</feature>
<feature type="strand" evidence="15">
    <location>
        <begin position="373"/>
        <end position="378"/>
    </location>
</feature>
<feature type="helix" evidence="15">
    <location>
        <begin position="381"/>
        <end position="394"/>
    </location>
</feature>
<feature type="helix" evidence="15">
    <location>
        <begin position="398"/>
        <end position="401"/>
    </location>
</feature>
<feature type="strand" evidence="15">
    <location>
        <begin position="403"/>
        <end position="407"/>
    </location>
</feature>
<feature type="strand" evidence="17">
    <location>
        <begin position="409"/>
        <end position="411"/>
    </location>
</feature>
<feature type="helix" evidence="15">
    <location>
        <begin position="414"/>
        <end position="422"/>
    </location>
</feature>
<feature type="strand" evidence="15">
    <location>
        <begin position="426"/>
        <end position="432"/>
    </location>
</feature>
<feature type="strand" evidence="14">
    <location>
        <begin position="435"/>
        <end position="437"/>
    </location>
</feature>
<feature type="strand" evidence="15">
    <location>
        <begin position="442"/>
        <end position="446"/>
    </location>
</feature>
<feature type="helix" evidence="15">
    <location>
        <begin position="448"/>
        <end position="457"/>
    </location>
</feature>
<feature type="strand" evidence="16">
    <location>
        <begin position="464"/>
        <end position="466"/>
    </location>
</feature>
<feature type="helix" evidence="15">
    <location>
        <begin position="476"/>
        <end position="492"/>
    </location>
</feature>
<feature type="helix" evidence="15">
    <location>
        <begin position="494"/>
        <end position="502"/>
    </location>
</feature>
<feature type="strand" evidence="15">
    <location>
        <begin position="505"/>
        <end position="510"/>
    </location>
</feature>
<feature type="helix" evidence="15">
    <location>
        <begin position="512"/>
        <end position="519"/>
    </location>
</feature>
<feature type="helix" evidence="15">
    <location>
        <begin position="521"/>
        <end position="528"/>
    </location>
</feature>
<feature type="helix" evidence="15">
    <location>
        <begin position="533"/>
        <end position="539"/>
    </location>
</feature>
<feature type="helix" evidence="15">
    <location>
        <begin position="541"/>
        <end position="551"/>
    </location>
</feature>
<feature type="helix" evidence="15">
    <location>
        <begin position="554"/>
        <end position="562"/>
    </location>
</feature>
<feature type="helix" evidence="12">
    <location>
        <begin position="564"/>
        <end position="566"/>
    </location>
</feature>
<feature type="helix" evidence="15">
    <location>
        <begin position="567"/>
        <end position="573"/>
    </location>
</feature>
<organism>
    <name type="scientific">Bacillus cereus (strain VD045)</name>
    <dbReference type="NCBI Taxonomy" id="1053225"/>
    <lineage>
        <taxon>Bacteria</taxon>
        <taxon>Bacillati</taxon>
        <taxon>Bacillota</taxon>
        <taxon>Bacilli</taxon>
        <taxon>Bacillales</taxon>
        <taxon>Bacillaceae</taxon>
        <taxon>Bacillus</taxon>
        <taxon>Bacillus cereus group</taxon>
    </lineage>
</organism>
<gene>
    <name evidence="5" type="primary">gajA</name>
    <name evidence="9" type="ORF">IIE_04982</name>
</gene>
<dbReference type="EC" id="3.1.-.-" evidence="3"/>
<dbReference type="EMBL" id="AHET01000033">
    <property type="protein sequence ID" value="EJR29742.1"/>
    <property type="molecule type" value="Genomic_DNA"/>
</dbReference>
<dbReference type="RefSeq" id="WP_000672733.1">
    <property type="nucleotide sequence ID" value="NZ_JH792082.1"/>
</dbReference>
<dbReference type="PDB" id="8J4T">
    <property type="method" value="EM"/>
    <property type="resolution" value="3.60 A"/>
    <property type="chains" value="A/B/C/D=1-578"/>
</dbReference>
<dbReference type="PDB" id="8JQ9">
    <property type="method" value="EM"/>
    <property type="resolution" value="2.66 A"/>
    <property type="chains" value="A/B/C/D=1-578"/>
</dbReference>
<dbReference type="PDB" id="8JQB">
    <property type="method" value="EM"/>
    <property type="resolution" value="3.20 A"/>
    <property type="chains" value="A/B/C/D=1-578"/>
</dbReference>
<dbReference type="PDB" id="8JQC">
    <property type="method" value="EM"/>
    <property type="resolution" value="3.39 A"/>
    <property type="chains" value="A/B/C/D=1-578"/>
</dbReference>
<dbReference type="PDB" id="8SM3">
    <property type="method" value="X-ray"/>
    <property type="resolution" value="3.00 A"/>
    <property type="chains" value="A=2-578"/>
</dbReference>
<dbReference type="PDB" id="8TJY">
    <property type="method" value="EM"/>
    <property type="resolution" value="2.79 A"/>
    <property type="chains" value="A/C/E/G=1-578"/>
</dbReference>
<dbReference type="PDB" id="8TK0">
    <property type="method" value="EM"/>
    <property type="resolution" value="3.23 A"/>
    <property type="chains" value="A/B/C/D=1-578"/>
</dbReference>
<dbReference type="PDB" id="8TK1">
    <property type="method" value="EM"/>
    <property type="resolution" value="2.98 A"/>
    <property type="chains" value="A/C/E/G=1-578"/>
</dbReference>
<dbReference type="PDB" id="8U7I">
    <property type="method" value="EM"/>
    <property type="resolution" value="2.57 A"/>
    <property type="chains" value="A/B/C/D=2-578"/>
</dbReference>
<dbReference type="PDB" id="8WY4">
    <property type="method" value="EM"/>
    <property type="resolution" value="2.81 A"/>
    <property type="chains" value="A/B/C/D=1-575"/>
</dbReference>
<dbReference type="PDB" id="8WY5">
    <property type="method" value="EM"/>
    <property type="resolution" value="3.12 A"/>
    <property type="chains" value="A/B/C/D=1-578"/>
</dbReference>
<dbReference type="PDB" id="8X51">
    <property type="method" value="EM"/>
    <property type="resolution" value="2.92 A"/>
    <property type="chains" value="A/B=1-578"/>
</dbReference>
<dbReference type="PDB" id="8X5I">
    <property type="method" value="EM"/>
    <property type="resolution" value="3.01 A"/>
    <property type="chains" value="A/B/C/D=1-578"/>
</dbReference>
<dbReference type="PDB" id="8X5N">
    <property type="method" value="EM"/>
    <property type="resolution" value="2.80 A"/>
    <property type="chains" value="A/B/C/D=1-578"/>
</dbReference>
<dbReference type="PDBsum" id="8J4T"/>
<dbReference type="PDBsum" id="8JQ9"/>
<dbReference type="PDBsum" id="8JQB"/>
<dbReference type="PDBsum" id="8JQC"/>
<dbReference type="PDBsum" id="8SM3"/>
<dbReference type="PDBsum" id="8TJY"/>
<dbReference type="PDBsum" id="8TK0"/>
<dbReference type="PDBsum" id="8TK1"/>
<dbReference type="PDBsum" id="8U7I"/>
<dbReference type="PDBsum" id="8WY4"/>
<dbReference type="PDBsum" id="8WY5"/>
<dbReference type="PDBsum" id="8X51"/>
<dbReference type="PDBsum" id="8X5I"/>
<dbReference type="PDBsum" id="8X5N"/>
<dbReference type="EMDB" id="EMD-35977"/>
<dbReference type="EMDB" id="EMD-36541"/>
<dbReference type="EMDB" id="EMD-36563"/>
<dbReference type="EMDB" id="EMD-36569"/>
<dbReference type="EMDB" id="EMD-37915"/>
<dbReference type="EMDB" id="EMD-37916"/>
<dbReference type="EMDB" id="EMD-38058"/>
<dbReference type="EMDB" id="EMD-38070"/>
<dbReference type="EMDB" id="EMD-38071"/>
<dbReference type="EMDB" id="EMD-41314"/>
<dbReference type="EMDB" id="EMD-41319"/>
<dbReference type="EMDB" id="EMD-41321"/>
<dbReference type="EMDB" id="EMD-41983"/>
<dbReference type="SMR" id="J8H9C1"/>
<dbReference type="PATRIC" id="fig|1053225.3.peg.5072"/>
<dbReference type="HOGENOM" id="CLU_021240_2_0_9"/>
<dbReference type="GO" id="GO:0004519">
    <property type="term" value="F:endonuclease activity"/>
    <property type="evidence" value="ECO:0007669"/>
    <property type="project" value="UniProtKB-KW"/>
</dbReference>
<dbReference type="GO" id="GO:0046872">
    <property type="term" value="F:metal ion binding"/>
    <property type="evidence" value="ECO:0007669"/>
    <property type="project" value="UniProtKB-KW"/>
</dbReference>
<dbReference type="GO" id="GO:0051607">
    <property type="term" value="P:defense response to virus"/>
    <property type="evidence" value="ECO:0007669"/>
    <property type="project" value="UniProtKB-KW"/>
</dbReference>
<dbReference type="CDD" id="cd01026">
    <property type="entry name" value="TOPRIM_OLD"/>
    <property type="match status" value="1"/>
</dbReference>
<dbReference type="Gene3D" id="3.40.50.300">
    <property type="entry name" value="P-loop containing nucleotide triphosphate hydrolases"/>
    <property type="match status" value="1"/>
</dbReference>
<dbReference type="InterPro" id="IPR041685">
    <property type="entry name" value="AAA_GajA/Old/RecF-like"/>
</dbReference>
<dbReference type="InterPro" id="IPR051396">
    <property type="entry name" value="Bact_Antivir_Def_Nuclease"/>
</dbReference>
<dbReference type="InterPro" id="IPR027417">
    <property type="entry name" value="P-loop_NTPase"/>
</dbReference>
<dbReference type="InterPro" id="IPR034139">
    <property type="entry name" value="TOPRIM_OLD"/>
</dbReference>
<dbReference type="PANTHER" id="PTHR43581">
    <property type="entry name" value="ATP/GTP PHOSPHATASE"/>
    <property type="match status" value="1"/>
</dbReference>
<dbReference type="PANTHER" id="PTHR43581:SF4">
    <property type="entry name" value="ATP_GTP PHOSPHATASE"/>
    <property type="match status" value="1"/>
</dbReference>
<dbReference type="Pfam" id="PF13175">
    <property type="entry name" value="AAA_15"/>
    <property type="match status" value="2"/>
</dbReference>
<dbReference type="Pfam" id="PF20469">
    <property type="entry name" value="OLD-like_TOPRIM"/>
    <property type="match status" value="1"/>
</dbReference>
<dbReference type="SUPFAM" id="SSF52540">
    <property type="entry name" value="P-loop containing nucleoside triphosphate hydrolases"/>
    <property type="match status" value="1"/>
</dbReference>
<protein>
    <recommendedName>
        <fullName evidence="6">Endonuclease GajA</fullName>
        <ecNumber evidence="3">3.1.-.-</ecNumber>
    </recommendedName>
    <alternativeName>
        <fullName evidence="7">Gabija protein GajA</fullName>
    </alternativeName>
    <alternativeName>
        <fullName>Nicking endonuclease GajA</fullName>
    </alternativeName>
</protein>